<sequence length="1030" mass="117266">MALSDIIQRRDWENPQSVNIHCLKAHSPLASYRDINHARDGIHAQRQSLNGQWKFKLFDAPEQVEGEFIDVQFNDSAWGDITVPSNWQLQGYDKPIYANVKYPFEVNPPYVPADNPTGCYRTRLTLTEADLESTQRIIFDGVNSAFHLWCNGDWVGYSQDSRLPAEFDLSQYLTAGENTLAVMVIRWSDGSYLEDQDMWWLSGIFRDVTLLSKPKQCIEDVFITPDLDACYRDGSLSIVTHISAPETSQVHVQLFDGSQAVTEPSIARPHNRRIDERGSYDDVVFQTLHVREPQQWTAETPNLYRVVVSLLDAEGNHLESEAYQVGFRKVEVKDGQLQLNGKPLLIRGVNRHEHHPELGHVMTEEDMVRDICLMKQYNFNAVRTAHYPNHPRWYELCDQYGLYVCDEANIETHGMIPMNRLSADPQWAHAYMSRYTQMVMRDKNHPSIIIWSLGNESGHGSSHNAMYAWSKQFDPSRPVQYEGGGANTTATDIICPMYARVNTTVEDEAVPKWPIKQWISLPNEQRPLILCEYAHAMGNSLGNFNEYWDAFREFPRLQGGFIWDWVDQGLSQWDNDGKHFWAYGGDFGDTINDRQFCINGLIFPDRTPHPTLEEVKFCQRMITVALTQQDKQQCHLTVTNEYVFRSTDNEQLHWSVLENGVEVQSGQCTLAIDAGSQQTVDIALDFQPKADAKYHLNTDICLISATPWAQAGHVSATEQFTLSNTSSLTLPKISILSAPQLSEQGRDILVSNLDKKHQWQWNVESGLLTSWMVDGQSQLLHAPEDNFFRAPLDNDIGVSEIDNIDPNAWVCRWDAAGIGRWERECVSCTSESLSQAVKVTSTFAYHHNGGVQAITVWTYTLDNQGEMHIDVDVTLADHLPPMPRIGLELALPLPSDNTTVTWQGLGPFENYPDRLAAARFGQHTQSLDAMHTPYIFPTDSGLRSGTQWLNVGNLECTGDFLFSVSRFSQQQLTEAKHTNELTLEDKIYLRIDHQHMGVGGDDSWSPSVHEEFQLTDNTYRFSIMLKPRHN</sequence>
<keyword id="KW-0326">Glycosidase</keyword>
<keyword id="KW-0378">Hydrolase</keyword>
<keyword id="KW-0460">Magnesium</keyword>
<keyword id="KW-0479">Metal-binding</keyword>
<keyword id="KW-1185">Reference proteome</keyword>
<keyword id="KW-0915">Sodium</keyword>
<comment type="catalytic activity">
    <reaction evidence="1">
        <text>Hydrolysis of terminal non-reducing beta-D-galactose residues in beta-D-galactosides.</text>
        <dbReference type="EC" id="3.2.1.23"/>
    </reaction>
</comment>
<comment type="cofactor">
    <cofactor evidence="1">
        <name>Mg(2+)</name>
        <dbReference type="ChEBI" id="CHEBI:18420"/>
    </cofactor>
    <text evidence="1">Binds 2 magnesium ions per monomer.</text>
</comment>
<comment type="cofactor">
    <cofactor evidence="1">
        <name>Na(+)</name>
        <dbReference type="ChEBI" id="CHEBI:29101"/>
    </cofactor>
    <text evidence="1">Binds 1 sodium ion per monomer.</text>
</comment>
<comment type="subunit">
    <text evidence="1">Homotetramer.</text>
</comment>
<comment type="similarity">
    <text evidence="1">Belongs to the glycosyl hydrolase 2 family.</text>
</comment>
<dbReference type="EC" id="3.2.1.23" evidence="1"/>
<dbReference type="EMBL" id="CR378675">
    <property type="protein sequence ID" value="CAG21907.1"/>
    <property type="molecule type" value="Genomic_DNA"/>
</dbReference>
<dbReference type="SMR" id="Q6LL68"/>
<dbReference type="STRING" id="298386.PBPRB0034"/>
<dbReference type="CAZy" id="GH2">
    <property type="family name" value="Glycoside Hydrolase Family 2"/>
</dbReference>
<dbReference type="KEGG" id="ppr:PBPRB0034"/>
<dbReference type="eggNOG" id="COG3250">
    <property type="taxonomic scope" value="Bacteria"/>
</dbReference>
<dbReference type="HOGENOM" id="CLU_002346_0_2_6"/>
<dbReference type="Proteomes" id="UP000000593">
    <property type="component" value="Chromosome 2"/>
</dbReference>
<dbReference type="GO" id="GO:0009341">
    <property type="term" value="C:beta-galactosidase complex"/>
    <property type="evidence" value="ECO:0007669"/>
    <property type="project" value="InterPro"/>
</dbReference>
<dbReference type="GO" id="GO:0004565">
    <property type="term" value="F:beta-galactosidase activity"/>
    <property type="evidence" value="ECO:0007669"/>
    <property type="project" value="UniProtKB-EC"/>
</dbReference>
<dbReference type="GO" id="GO:0030246">
    <property type="term" value="F:carbohydrate binding"/>
    <property type="evidence" value="ECO:0007669"/>
    <property type="project" value="InterPro"/>
</dbReference>
<dbReference type="GO" id="GO:0000287">
    <property type="term" value="F:magnesium ion binding"/>
    <property type="evidence" value="ECO:0007669"/>
    <property type="project" value="UniProtKB-UniRule"/>
</dbReference>
<dbReference type="GO" id="GO:0005990">
    <property type="term" value="P:lactose catabolic process"/>
    <property type="evidence" value="ECO:0007669"/>
    <property type="project" value="TreeGrafter"/>
</dbReference>
<dbReference type="FunFam" id="3.20.20.80:FF:000018">
    <property type="entry name" value="Beta-galactosidase"/>
    <property type="match status" value="1"/>
</dbReference>
<dbReference type="Gene3D" id="2.70.98.10">
    <property type="match status" value="1"/>
</dbReference>
<dbReference type="Gene3D" id="2.60.120.260">
    <property type="entry name" value="Galactose-binding domain-like"/>
    <property type="match status" value="1"/>
</dbReference>
<dbReference type="Gene3D" id="3.20.20.80">
    <property type="entry name" value="Glycosidases"/>
    <property type="match status" value="1"/>
</dbReference>
<dbReference type="Gene3D" id="2.60.40.10">
    <property type="entry name" value="Immunoglobulins"/>
    <property type="match status" value="2"/>
</dbReference>
<dbReference type="HAMAP" id="MF_01687">
    <property type="entry name" value="Beta_gal"/>
    <property type="match status" value="1"/>
</dbReference>
<dbReference type="InterPro" id="IPR004199">
    <property type="entry name" value="B-gal_small/dom_5"/>
</dbReference>
<dbReference type="InterPro" id="IPR050347">
    <property type="entry name" value="Bact_Beta-galactosidase"/>
</dbReference>
<dbReference type="InterPro" id="IPR036156">
    <property type="entry name" value="Beta-gal/glucu_dom_sf"/>
</dbReference>
<dbReference type="InterPro" id="IPR011013">
    <property type="entry name" value="Gal_mutarotase_sf_dom"/>
</dbReference>
<dbReference type="InterPro" id="IPR008979">
    <property type="entry name" value="Galactose-bd-like_sf"/>
</dbReference>
<dbReference type="InterPro" id="IPR014718">
    <property type="entry name" value="GH-type_carb-bd"/>
</dbReference>
<dbReference type="InterPro" id="IPR006101">
    <property type="entry name" value="Glyco_hydro_2"/>
</dbReference>
<dbReference type="InterPro" id="IPR023232">
    <property type="entry name" value="Glyco_hydro_2_AS"/>
</dbReference>
<dbReference type="InterPro" id="IPR023933">
    <property type="entry name" value="Glyco_hydro_2_beta_Galsidase"/>
</dbReference>
<dbReference type="InterPro" id="IPR006103">
    <property type="entry name" value="Glyco_hydro_2_cat"/>
</dbReference>
<dbReference type="InterPro" id="IPR006102">
    <property type="entry name" value="Glyco_hydro_2_Ig-like"/>
</dbReference>
<dbReference type="InterPro" id="IPR006104">
    <property type="entry name" value="Glyco_hydro_2_N"/>
</dbReference>
<dbReference type="InterPro" id="IPR017853">
    <property type="entry name" value="Glycoside_hydrolase_SF"/>
</dbReference>
<dbReference type="InterPro" id="IPR013783">
    <property type="entry name" value="Ig-like_fold"/>
</dbReference>
<dbReference type="InterPro" id="IPR032312">
    <property type="entry name" value="LacZ_4"/>
</dbReference>
<dbReference type="NCBIfam" id="NF007074">
    <property type="entry name" value="PRK09525.1"/>
    <property type="match status" value="1"/>
</dbReference>
<dbReference type="PANTHER" id="PTHR46323">
    <property type="entry name" value="BETA-GALACTOSIDASE"/>
    <property type="match status" value="1"/>
</dbReference>
<dbReference type="PANTHER" id="PTHR46323:SF2">
    <property type="entry name" value="BETA-GALACTOSIDASE"/>
    <property type="match status" value="1"/>
</dbReference>
<dbReference type="Pfam" id="PF02929">
    <property type="entry name" value="Bgal_small_N"/>
    <property type="match status" value="1"/>
</dbReference>
<dbReference type="Pfam" id="PF00703">
    <property type="entry name" value="Glyco_hydro_2"/>
    <property type="match status" value="1"/>
</dbReference>
<dbReference type="Pfam" id="PF02836">
    <property type="entry name" value="Glyco_hydro_2_C"/>
    <property type="match status" value="1"/>
</dbReference>
<dbReference type="Pfam" id="PF02837">
    <property type="entry name" value="Glyco_hydro_2_N"/>
    <property type="match status" value="1"/>
</dbReference>
<dbReference type="Pfam" id="PF16353">
    <property type="entry name" value="LacZ_4"/>
    <property type="match status" value="1"/>
</dbReference>
<dbReference type="PRINTS" id="PR00132">
    <property type="entry name" value="GLHYDRLASE2"/>
</dbReference>
<dbReference type="SMART" id="SM01038">
    <property type="entry name" value="Bgal_small_N"/>
    <property type="match status" value="1"/>
</dbReference>
<dbReference type="SUPFAM" id="SSF51445">
    <property type="entry name" value="(Trans)glycosidases"/>
    <property type="match status" value="1"/>
</dbReference>
<dbReference type="SUPFAM" id="SSF49303">
    <property type="entry name" value="beta-Galactosidase/glucuronidase domain"/>
    <property type="match status" value="2"/>
</dbReference>
<dbReference type="SUPFAM" id="SSF74650">
    <property type="entry name" value="Galactose mutarotase-like"/>
    <property type="match status" value="1"/>
</dbReference>
<dbReference type="SUPFAM" id="SSF49785">
    <property type="entry name" value="Galactose-binding domain-like"/>
    <property type="match status" value="1"/>
</dbReference>
<dbReference type="PROSITE" id="PS00608">
    <property type="entry name" value="GLYCOSYL_HYDROL_F2_2"/>
    <property type="match status" value="1"/>
</dbReference>
<name>BGAL_PHOPR</name>
<organism>
    <name type="scientific">Photobacterium profundum (strain SS9)</name>
    <dbReference type="NCBI Taxonomy" id="298386"/>
    <lineage>
        <taxon>Bacteria</taxon>
        <taxon>Pseudomonadati</taxon>
        <taxon>Pseudomonadota</taxon>
        <taxon>Gammaproteobacteria</taxon>
        <taxon>Vibrionales</taxon>
        <taxon>Vibrionaceae</taxon>
        <taxon>Photobacterium</taxon>
    </lineage>
</organism>
<reference key="1">
    <citation type="journal article" date="2005" name="Science">
        <title>Life at depth: Photobacterium profundum genome sequence and expression analysis.</title>
        <authorList>
            <person name="Vezzi A."/>
            <person name="Campanaro S."/>
            <person name="D'Angelo M."/>
            <person name="Simonato F."/>
            <person name="Vitulo N."/>
            <person name="Lauro F.M."/>
            <person name="Cestaro A."/>
            <person name="Malacrida G."/>
            <person name="Simionati B."/>
            <person name="Cannata N."/>
            <person name="Romualdi C."/>
            <person name="Bartlett D.H."/>
            <person name="Valle G."/>
        </authorList>
    </citation>
    <scope>NUCLEOTIDE SEQUENCE [LARGE SCALE GENOMIC DNA]</scope>
    <source>
        <strain>ATCC BAA-1253 / SS9</strain>
    </source>
</reference>
<proteinExistence type="inferred from homology"/>
<feature type="chain" id="PRO_0000367005" description="Beta-galactosidase">
    <location>
        <begin position="1"/>
        <end position="1030"/>
    </location>
</feature>
<feature type="active site" description="Proton donor" evidence="1">
    <location>
        <position position="456"/>
    </location>
</feature>
<feature type="active site" description="Nucleophile" evidence="1">
    <location>
        <position position="532"/>
    </location>
</feature>
<feature type="binding site" evidence="1">
    <location>
        <position position="99"/>
    </location>
    <ligand>
        <name>substrate</name>
    </ligand>
</feature>
<feature type="binding site" evidence="1">
    <location>
        <position position="197"/>
    </location>
    <ligand>
        <name>Na(+)</name>
        <dbReference type="ChEBI" id="CHEBI:29101"/>
    </ligand>
</feature>
<feature type="binding site" evidence="1">
    <location>
        <position position="197"/>
    </location>
    <ligand>
        <name>substrate</name>
    </ligand>
</feature>
<feature type="binding site" evidence="1">
    <location>
        <position position="411"/>
    </location>
    <ligand>
        <name>Mg(2+)</name>
        <dbReference type="ChEBI" id="CHEBI:18420"/>
        <label>1</label>
    </ligand>
</feature>
<feature type="binding site" evidence="1">
    <location>
        <position position="413"/>
    </location>
    <ligand>
        <name>Mg(2+)</name>
        <dbReference type="ChEBI" id="CHEBI:18420"/>
        <label>1</label>
    </ligand>
</feature>
<feature type="binding site" evidence="1">
    <location>
        <position position="456"/>
    </location>
    <ligand>
        <name>Mg(2+)</name>
        <dbReference type="ChEBI" id="CHEBI:18420"/>
        <label>1</label>
    </ligand>
</feature>
<feature type="binding site" evidence="1">
    <location>
        <position position="456"/>
    </location>
    <ligand>
        <name>substrate</name>
    </ligand>
</feature>
<feature type="binding site" evidence="1">
    <location>
        <begin position="532"/>
        <end position="535"/>
    </location>
    <ligand>
        <name>substrate</name>
    </ligand>
</feature>
<feature type="binding site" evidence="1">
    <location>
        <position position="592"/>
    </location>
    <ligand>
        <name>Mg(2+)</name>
        <dbReference type="ChEBI" id="CHEBI:18420"/>
        <label>2</label>
    </ligand>
</feature>
<feature type="binding site" evidence="1">
    <location>
        <position position="596"/>
    </location>
    <ligand>
        <name>Na(+)</name>
        <dbReference type="ChEBI" id="CHEBI:29101"/>
    </ligand>
</feature>
<feature type="binding site" evidence="1">
    <location>
        <position position="599"/>
    </location>
    <ligand>
        <name>Na(+)</name>
        <dbReference type="ChEBI" id="CHEBI:29101"/>
    </ligand>
</feature>
<feature type="binding site" evidence="1">
    <location>
        <position position="599"/>
    </location>
    <ligand>
        <name>substrate</name>
    </ligand>
</feature>
<feature type="binding site" evidence="1">
    <location>
        <position position="1004"/>
    </location>
    <ligand>
        <name>substrate</name>
    </ligand>
</feature>
<feature type="site" description="Transition state stabilizer" evidence="1">
    <location>
        <position position="352"/>
    </location>
</feature>
<feature type="site" description="Transition state stabilizer" evidence="1">
    <location>
        <position position="386"/>
    </location>
</feature>
<gene>
    <name evidence="1" type="primary">lacZ</name>
    <name type="ordered locus">PBPRB0034</name>
</gene>
<protein>
    <recommendedName>
        <fullName evidence="1">Beta-galactosidase</fullName>
        <shortName evidence="1">Beta-gal</shortName>
        <ecNumber evidence="1">3.2.1.23</ecNumber>
    </recommendedName>
    <alternativeName>
        <fullName evidence="1">Lactase</fullName>
    </alternativeName>
</protein>
<accession>Q6LL68</accession>
<evidence type="ECO:0000255" key="1">
    <source>
        <dbReference type="HAMAP-Rule" id="MF_01687"/>
    </source>
</evidence>